<sequence length="360" mass="40483">MKTSMQSKLDQLTTRLAELNDLLSRENVTADLDQYRKLTREHAEIGPVVEHYAQWRQARADELAAQELLADASMRDFAEDELRGARDRMGRLAAELQTMLLPKDPNDERNIFVEIRAGTGGDESALFAGNLLRMYLRYAERQRWQVEMMSESPSDLGGYKEVIVRIAGYGAYSRLKFESGGHRVQRVPATETQGRIHTSACTVAVMPEADEIGEVEINPADLRIDTFRASGAGGQHINKTDSAVRVTHIPTGIVVECQDDRSQHKNKDRALKVLAARIKDKQYHEQHAKEAATRKSLIGSGDRSERIRTYNFPQGRMTDHRINLTLYKLEQIMDGDLDELIAALVSEHQAELLASLGDAE</sequence>
<feature type="chain" id="PRO_1000004865" description="Peptide chain release factor 1">
    <location>
        <begin position="1"/>
        <end position="360"/>
    </location>
</feature>
<feature type="modified residue" description="N5-methylglutamine" evidence="1">
    <location>
        <position position="235"/>
    </location>
</feature>
<evidence type="ECO:0000255" key="1">
    <source>
        <dbReference type="HAMAP-Rule" id="MF_00093"/>
    </source>
</evidence>
<gene>
    <name evidence="1" type="primary">prfA</name>
    <name type="ordered locus">BMA10229_0972</name>
</gene>
<comment type="function">
    <text evidence="1">Peptide chain release factor 1 directs the termination of translation in response to the peptide chain termination codons UAG and UAA.</text>
</comment>
<comment type="subcellular location">
    <subcellularLocation>
        <location evidence="1">Cytoplasm</location>
    </subcellularLocation>
</comment>
<comment type="PTM">
    <text evidence="1">Methylated by PrmC. Methylation increases the termination efficiency of RF1.</text>
</comment>
<comment type="similarity">
    <text evidence="1">Belongs to the prokaryotic/mitochondrial release factor family.</text>
</comment>
<accession>A2RYL2</accession>
<organism>
    <name type="scientific">Burkholderia mallei (strain NCTC 10229)</name>
    <dbReference type="NCBI Taxonomy" id="412022"/>
    <lineage>
        <taxon>Bacteria</taxon>
        <taxon>Pseudomonadati</taxon>
        <taxon>Pseudomonadota</taxon>
        <taxon>Betaproteobacteria</taxon>
        <taxon>Burkholderiales</taxon>
        <taxon>Burkholderiaceae</taxon>
        <taxon>Burkholderia</taxon>
        <taxon>pseudomallei group</taxon>
    </lineage>
</organism>
<protein>
    <recommendedName>
        <fullName evidence="1">Peptide chain release factor 1</fullName>
        <shortName evidence="1">RF-1</shortName>
    </recommendedName>
</protein>
<keyword id="KW-0963">Cytoplasm</keyword>
<keyword id="KW-0488">Methylation</keyword>
<keyword id="KW-0648">Protein biosynthesis</keyword>
<proteinExistence type="inferred from homology"/>
<dbReference type="EMBL" id="CP000545">
    <property type="protein sequence ID" value="ABM99699.1"/>
    <property type="molecule type" value="Genomic_DNA"/>
</dbReference>
<dbReference type="RefSeq" id="WP_004186862.1">
    <property type="nucleotide sequence ID" value="NC_008835.1"/>
</dbReference>
<dbReference type="SMR" id="A2RYL2"/>
<dbReference type="GeneID" id="92976802"/>
<dbReference type="KEGG" id="bml:BMA10229_0972"/>
<dbReference type="HOGENOM" id="CLU_036856_0_1_4"/>
<dbReference type="Proteomes" id="UP000002283">
    <property type="component" value="Chromosome II"/>
</dbReference>
<dbReference type="GO" id="GO:0005737">
    <property type="term" value="C:cytoplasm"/>
    <property type="evidence" value="ECO:0007669"/>
    <property type="project" value="UniProtKB-SubCell"/>
</dbReference>
<dbReference type="GO" id="GO:0016149">
    <property type="term" value="F:translation release factor activity, codon specific"/>
    <property type="evidence" value="ECO:0007669"/>
    <property type="project" value="UniProtKB-UniRule"/>
</dbReference>
<dbReference type="FunFam" id="3.30.160.20:FF:000004">
    <property type="entry name" value="Peptide chain release factor 1"/>
    <property type="match status" value="1"/>
</dbReference>
<dbReference type="FunFam" id="3.30.70.1660:FF:000002">
    <property type="entry name" value="Peptide chain release factor 1"/>
    <property type="match status" value="1"/>
</dbReference>
<dbReference type="FunFam" id="3.30.70.1660:FF:000004">
    <property type="entry name" value="Peptide chain release factor 1"/>
    <property type="match status" value="1"/>
</dbReference>
<dbReference type="Gene3D" id="3.30.160.20">
    <property type="match status" value="1"/>
</dbReference>
<dbReference type="Gene3D" id="3.30.70.1660">
    <property type="match status" value="1"/>
</dbReference>
<dbReference type="Gene3D" id="6.10.140.1950">
    <property type="match status" value="1"/>
</dbReference>
<dbReference type="HAMAP" id="MF_00093">
    <property type="entry name" value="Rel_fac_1"/>
    <property type="match status" value="1"/>
</dbReference>
<dbReference type="InterPro" id="IPR005139">
    <property type="entry name" value="PCRF"/>
</dbReference>
<dbReference type="InterPro" id="IPR000352">
    <property type="entry name" value="Pep_chain_release_fac_I"/>
</dbReference>
<dbReference type="InterPro" id="IPR045853">
    <property type="entry name" value="Pep_chain_release_fac_I_sf"/>
</dbReference>
<dbReference type="InterPro" id="IPR050057">
    <property type="entry name" value="Prokaryotic/Mito_RF"/>
</dbReference>
<dbReference type="InterPro" id="IPR004373">
    <property type="entry name" value="RF-1"/>
</dbReference>
<dbReference type="NCBIfam" id="TIGR00019">
    <property type="entry name" value="prfA"/>
    <property type="match status" value="1"/>
</dbReference>
<dbReference type="NCBIfam" id="NF001859">
    <property type="entry name" value="PRK00591.1"/>
    <property type="match status" value="1"/>
</dbReference>
<dbReference type="PANTHER" id="PTHR43804">
    <property type="entry name" value="LD18447P"/>
    <property type="match status" value="1"/>
</dbReference>
<dbReference type="PANTHER" id="PTHR43804:SF7">
    <property type="entry name" value="LD18447P"/>
    <property type="match status" value="1"/>
</dbReference>
<dbReference type="Pfam" id="PF03462">
    <property type="entry name" value="PCRF"/>
    <property type="match status" value="1"/>
</dbReference>
<dbReference type="Pfam" id="PF00472">
    <property type="entry name" value="RF-1"/>
    <property type="match status" value="1"/>
</dbReference>
<dbReference type="SMART" id="SM00937">
    <property type="entry name" value="PCRF"/>
    <property type="match status" value="1"/>
</dbReference>
<dbReference type="SUPFAM" id="SSF75620">
    <property type="entry name" value="Release factor"/>
    <property type="match status" value="1"/>
</dbReference>
<dbReference type="PROSITE" id="PS00745">
    <property type="entry name" value="RF_PROK_I"/>
    <property type="match status" value="1"/>
</dbReference>
<reference key="1">
    <citation type="journal article" date="2010" name="Genome Biol. Evol.">
        <title>Continuing evolution of Burkholderia mallei through genome reduction and large-scale rearrangements.</title>
        <authorList>
            <person name="Losada L."/>
            <person name="Ronning C.M."/>
            <person name="DeShazer D."/>
            <person name="Woods D."/>
            <person name="Fedorova N."/>
            <person name="Kim H.S."/>
            <person name="Shabalina S.A."/>
            <person name="Pearson T.R."/>
            <person name="Brinkac L."/>
            <person name="Tan P."/>
            <person name="Nandi T."/>
            <person name="Crabtree J."/>
            <person name="Badger J."/>
            <person name="Beckstrom-Sternberg S."/>
            <person name="Saqib M."/>
            <person name="Schutzer S.E."/>
            <person name="Keim P."/>
            <person name="Nierman W.C."/>
        </authorList>
    </citation>
    <scope>NUCLEOTIDE SEQUENCE [LARGE SCALE GENOMIC DNA]</scope>
    <source>
        <strain>NCTC 10229</strain>
    </source>
</reference>
<name>RF1_BURM9</name>